<organism>
    <name type="scientific">Shewanella sp. (strain ANA-3)</name>
    <dbReference type="NCBI Taxonomy" id="94122"/>
    <lineage>
        <taxon>Bacteria</taxon>
        <taxon>Pseudomonadati</taxon>
        <taxon>Pseudomonadota</taxon>
        <taxon>Gammaproteobacteria</taxon>
        <taxon>Alteromonadales</taxon>
        <taxon>Shewanellaceae</taxon>
        <taxon>Shewanella</taxon>
    </lineage>
</organism>
<proteinExistence type="inferred from homology"/>
<reference key="1">
    <citation type="submission" date="2006-09" db="EMBL/GenBank/DDBJ databases">
        <title>Complete sequence of chromosome 1 of Shewanella sp. ANA-3.</title>
        <authorList>
            <person name="Copeland A."/>
            <person name="Lucas S."/>
            <person name="Lapidus A."/>
            <person name="Barry K."/>
            <person name="Detter J.C."/>
            <person name="Glavina del Rio T."/>
            <person name="Hammon N."/>
            <person name="Israni S."/>
            <person name="Dalin E."/>
            <person name="Tice H."/>
            <person name="Pitluck S."/>
            <person name="Chertkov O."/>
            <person name="Brettin T."/>
            <person name="Bruce D."/>
            <person name="Han C."/>
            <person name="Tapia R."/>
            <person name="Gilna P."/>
            <person name="Schmutz J."/>
            <person name="Larimer F."/>
            <person name="Land M."/>
            <person name="Hauser L."/>
            <person name="Kyrpides N."/>
            <person name="Kim E."/>
            <person name="Newman D."/>
            <person name="Salticov C."/>
            <person name="Konstantinidis K."/>
            <person name="Klappenback J."/>
            <person name="Tiedje J."/>
            <person name="Richardson P."/>
        </authorList>
    </citation>
    <scope>NUCLEOTIDE SEQUENCE [LARGE SCALE GENOMIC DNA]</scope>
    <source>
        <strain>ANA-3</strain>
    </source>
</reference>
<accession>A0L2T4</accession>
<sequence>MAAPGEALTPQGYIQHHLTNLHVGEGFWTWHIDSLFFSVGLGVLFLWIFRSVGKKATSGVPGKLQCFIEMIVEFVDNSVKESFHGRNALIAPLALTIFVWVFMMNFMDMLPVDWLPWLASLAGVPYLKVVPTTDVNITFSLAIGVFVLIIYYSIKVKGVSGFVKELTLQPFNHKAMIPVNLLLETVTLVAKPISLALRLFGNLYAGELIFILIALMYGTNLLLSSLGVTLQLGWLIFHILVITLQAFIFMMLTIVYLSMAHEDH</sequence>
<feature type="chain" id="PRO_0000362459" description="ATP synthase subunit a">
    <location>
        <begin position="1"/>
        <end position="264"/>
    </location>
</feature>
<feature type="transmembrane region" description="Helical" evidence="1">
    <location>
        <begin position="29"/>
        <end position="49"/>
    </location>
</feature>
<feature type="transmembrane region" description="Helical" evidence="1">
    <location>
        <begin position="87"/>
        <end position="107"/>
    </location>
</feature>
<feature type="transmembrane region" description="Helical" evidence="1">
    <location>
        <begin position="134"/>
        <end position="154"/>
    </location>
</feature>
<feature type="transmembrane region" description="Helical" evidence="1">
    <location>
        <begin position="177"/>
        <end position="197"/>
    </location>
</feature>
<feature type="transmembrane region" description="Helical" evidence="1">
    <location>
        <begin position="208"/>
        <end position="228"/>
    </location>
</feature>
<feature type="transmembrane region" description="Helical" evidence="1">
    <location>
        <begin position="235"/>
        <end position="255"/>
    </location>
</feature>
<comment type="function">
    <text evidence="1">Key component of the proton channel; it plays a direct role in the translocation of protons across the membrane.</text>
</comment>
<comment type="subunit">
    <text evidence="1">F-type ATPases have 2 components, CF(1) - the catalytic core - and CF(0) - the membrane proton channel. CF(1) has five subunits: alpha(3), beta(3), gamma(1), delta(1), epsilon(1). CF(0) has three main subunits: a(1), b(2) and c(9-12). The alpha and beta chains form an alternating ring which encloses part of the gamma chain. CF(1) is attached to CF(0) by a central stalk formed by the gamma and epsilon chains, while a peripheral stalk is formed by the delta and b chains.</text>
</comment>
<comment type="subcellular location">
    <subcellularLocation>
        <location evidence="1">Cell inner membrane</location>
        <topology evidence="1">Multi-pass membrane protein</topology>
    </subcellularLocation>
</comment>
<comment type="similarity">
    <text evidence="1">Belongs to the ATPase A chain family.</text>
</comment>
<name>ATP6_SHESA</name>
<gene>
    <name evidence="1" type="primary">atpB</name>
    <name type="ordered locus">Shewana3_4136</name>
</gene>
<keyword id="KW-0066">ATP synthesis</keyword>
<keyword id="KW-0997">Cell inner membrane</keyword>
<keyword id="KW-1003">Cell membrane</keyword>
<keyword id="KW-0138">CF(0)</keyword>
<keyword id="KW-0375">Hydrogen ion transport</keyword>
<keyword id="KW-0406">Ion transport</keyword>
<keyword id="KW-0472">Membrane</keyword>
<keyword id="KW-0812">Transmembrane</keyword>
<keyword id="KW-1133">Transmembrane helix</keyword>
<keyword id="KW-0813">Transport</keyword>
<evidence type="ECO:0000255" key="1">
    <source>
        <dbReference type="HAMAP-Rule" id="MF_01393"/>
    </source>
</evidence>
<protein>
    <recommendedName>
        <fullName evidence="1">ATP synthase subunit a</fullName>
    </recommendedName>
    <alternativeName>
        <fullName evidence="1">ATP synthase F0 sector subunit a</fullName>
    </alternativeName>
    <alternativeName>
        <fullName evidence="1">F-ATPase subunit 6</fullName>
    </alternativeName>
</protein>
<dbReference type="EMBL" id="CP000469">
    <property type="protein sequence ID" value="ABK50353.1"/>
    <property type="molecule type" value="Genomic_DNA"/>
</dbReference>
<dbReference type="RefSeq" id="WP_011718837.1">
    <property type="nucleotide sequence ID" value="NC_008577.1"/>
</dbReference>
<dbReference type="SMR" id="A0L2T4"/>
<dbReference type="STRING" id="94122.Shewana3_4136"/>
<dbReference type="KEGG" id="shn:Shewana3_4136"/>
<dbReference type="eggNOG" id="COG0356">
    <property type="taxonomic scope" value="Bacteria"/>
</dbReference>
<dbReference type="HOGENOM" id="CLU_041018_1_0_6"/>
<dbReference type="OrthoDB" id="9789241at2"/>
<dbReference type="Proteomes" id="UP000002589">
    <property type="component" value="Chromosome"/>
</dbReference>
<dbReference type="GO" id="GO:0005886">
    <property type="term" value="C:plasma membrane"/>
    <property type="evidence" value="ECO:0007669"/>
    <property type="project" value="UniProtKB-SubCell"/>
</dbReference>
<dbReference type="GO" id="GO:0045259">
    <property type="term" value="C:proton-transporting ATP synthase complex"/>
    <property type="evidence" value="ECO:0007669"/>
    <property type="project" value="UniProtKB-KW"/>
</dbReference>
<dbReference type="GO" id="GO:0046933">
    <property type="term" value="F:proton-transporting ATP synthase activity, rotational mechanism"/>
    <property type="evidence" value="ECO:0007669"/>
    <property type="project" value="UniProtKB-UniRule"/>
</dbReference>
<dbReference type="GO" id="GO:0042777">
    <property type="term" value="P:proton motive force-driven plasma membrane ATP synthesis"/>
    <property type="evidence" value="ECO:0007669"/>
    <property type="project" value="TreeGrafter"/>
</dbReference>
<dbReference type="CDD" id="cd00310">
    <property type="entry name" value="ATP-synt_Fo_a_6"/>
    <property type="match status" value="1"/>
</dbReference>
<dbReference type="FunFam" id="1.20.120.220:FF:000002">
    <property type="entry name" value="ATP synthase subunit a"/>
    <property type="match status" value="1"/>
</dbReference>
<dbReference type="Gene3D" id="1.20.120.220">
    <property type="entry name" value="ATP synthase, F0 complex, subunit A"/>
    <property type="match status" value="1"/>
</dbReference>
<dbReference type="HAMAP" id="MF_01393">
    <property type="entry name" value="ATP_synth_a_bact"/>
    <property type="match status" value="1"/>
</dbReference>
<dbReference type="InterPro" id="IPR045082">
    <property type="entry name" value="ATP_syn_F0_a_bact/chloroplast"/>
</dbReference>
<dbReference type="InterPro" id="IPR000568">
    <property type="entry name" value="ATP_synth_F0_asu"/>
</dbReference>
<dbReference type="InterPro" id="IPR023011">
    <property type="entry name" value="ATP_synth_F0_asu_AS"/>
</dbReference>
<dbReference type="InterPro" id="IPR035908">
    <property type="entry name" value="F0_ATP_A_sf"/>
</dbReference>
<dbReference type="NCBIfam" id="TIGR01131">
    <property type="entry name" value="ATP_synt_6_or_A"/>
    <property type="match status" value="1"/>
</dbReference>
<dbReference type="NCBIfam" id="NF004477">
    <property type="entry name" value="PRK05815.1-1"/>
    <property type="match status" value="1"/>
</dbReference>
<dbReference type="PANTHER" id="PTHR42823">
    <property type="entry name" value="ATP SYNTHASE SUBUNIT A, CHLOROPLASTIC"/>
    <property type="match status" value="1"/>
</dbReference>
<dbReference type="PANTHER" id="PTHR42823:SF3">
    <property type="entry name" value="ATP SYNTHASE SUBUNIT A, CHLOROPLASTIC"/>
    <property type="match status" value="1"/>
</dbReference>
<dbReference type="Pfam" id="PF00119">
    <property type="entry name" value="ATP-synt_A"/>
    <property type="match status" value="1"/>
</dbReference>
<dbReference type="PRINTS" id="PR00123">
    <property type="entry name" value="ATPASEA"/>
</dbReference>
<dbReference type="SUPFAM" id="SSF81336">
    <property type="entry name" value="F1F0 ATP synthase subunit A"/>
    <property type="match status" value="1"/>
</dbReference>
<dbReference type="PROSITE" id="PS00449">
    <property type="entry name" value="ATPASE_A"/>
    <property type="match status" value="1"/>
</dbReference>